<feature type="signal peptide" evidence="4">
    <location>
        <begin position="1"/>
        <end position="20"/>
    </location>
</feature>
<feature type="chain" id="PRO_5016013014" description="Apolipoprotein A-IV">
    <location>
        <begin position="21"/>
        <end position="382"/>
    </location>
</feature>
<feature type="repeat" description="1">
    <location>
        <begin position="33"/>
        <end position="54"/>
    </location>
</feature>
<feature type="repeat" description="2">
    <location>
        <begin position="60"/>
        <end position="81"/>
    </location>
</feature>
<feature type="repeat" description="3">
    <location>
        <begin position="82"/>
        <end position="103"/>
    </location>
</feature>
<feature type="repeat" description="4">
    <location>
        <begin position="115"/>
        <end position="136"/>
    </location>
</feature>
<feature type="repeat" description="5">
    <location>
        <begin position="137"/>
        <end position="158"/>
    </location>
</feature>
<feature type="repeat" description="6">
    <location>
        <begin position="159"/>
        <end position="180"/>
    </location>
</feature>
<feature type="repeat" description="7">
    <location>
        <begin position="181"/>
        <end position="202"/>
    </location>
</feature>
<feature type="repeat" description="8">
    <location>
        <begin position="203"/>
        <end position="224"/>
    </location>
</feature>
<feature type="repeat" description="9">
    <location>
        <begin position="225"/>
        <end position="246"/>
    </location>
</feature>
<feature type="repeat" description="10">
    <location>
        <begin position="247"/>
        <end position="268"/>
    </location>
</feature>
<feature type="repeat" description="11">
    <location>
        <begin position="269"/>
        <end position="286"/>
    </location>
</feature>
<feature type="repeat" description="12">
    <location>
        <begin position="287"/>
        <end position="308"/>
    </location>
</feature>
<feature type="repeat" description="13">
    <location>
        <begin position="309"/>
        <end position="330"/>
    </location>
</feature>
<feature type="region of interest" description="13 X 22 AA approximate tandem repeats">
    <location>
        <begin position="33"/>
        <end position="330"/>
    </location>
</feature>
<keyword id="KW-0162">Chylomicron</keyword>
<keyword id="KW-0345">HDL</keyword>
<keyword id="KW-0445">Lipid transport</keyword>
<keyword id="KW-0597">Phosphoprotein</keyword>
<keyword id="KW-1185">Reference proteome</keyword>
<keyword id="KW-0677">Repeat</keyword>
<keyword id="KW-0964">Secreted</keyword>
<keyword id="KW-0732">Signal</keyword>
<keyword id="KW-0813">Transport</keyword>
<gene>
    <name type="primary">APOA4</name>
</gene>
<dbReference type="EMBL" id="NINY01000000">
    <property type="status" value="NOT_ANNOTATED_CDS"/>
    <property type="molecule type" value="Genomic_DNA"/>
</dbReference>
<dbReference type="RefSeq" id="XP_021552198.1">
    <property type="nucleotide sequence ID" value="XM_021696523.1"/>
</dbReference>
<dbReference type="SMR" id="A0A2Y9HKB5"/>
<dbReference type="GeneID" id="110586321"/>
<dbReference type="InParanoid" id="A0A2Y9HKB5"/>
<dbReference type="Proteomes" id="UP000248481">
    <property type="component" value="Chromosome 11"/>
</dbReference>
<dbReference type="GO" id="GO:0042627">
    <property type="term" value="C:chylomicron"/>
    <property type="evidence" value="ECO:0007669"/>
    <property type="project" value="UniProtKB-KW"/>
</dbReference>
<dbReference type="GO" id="GO:1903561">
    <property type="term" value="C:extracellular vesicle"/>
    <property type="evidence" value="ECO:0007669"/>
    <property type="project" value="TreeGrafter"/>
</dbReference>
<dbReference type="GO" id="GO:0034364">
    <property type="term" value="C:high-density lipoprotein particle"/>
    <property type="evidence" value="ECO:0007669"/>
    <property type="project" value="UniProtKB-KW"/>
</dbReference>
<dbReference type="GO" id="GO:0034362">
    <property type="term" value="C:low-density lipoprotein particle"/>
    <property type="evidence" value="ECO:0007669"/>
    <property type="project" value="TreeGrafter"/>
</dbReference>
<dbReference type="GO" id="GO:0034361">
    <property type="term" value="C:very-low-density lipoprotein particle"/>
    <property type="evidence" value="ECO:0007669"/>
    <property type="project" value="TreeGrafter"/>
</dbReference>
<dbReference type="GO" id="GO:0120020">
    <property type="term" value="F:cholesterol transfer activity"/>
    <property type="evidence" value="ECO:0007669"/>
    <property type="project" value="TreeGrafter"/>
</dbReference>
<dbReference type="GO" id="GO:0060228">
    <property type="term" value="F:phosphatidylcholine-sterol O-acyltransferase activator activity"/>
    <property type="evidence" value="ECO:0007669"/>
    <property type="project" value="TreeGrafter"/>
</dbReference>
<dbReference type="GO" id="GO:0005543">
    <property type="term" value="F:phospholipid binding"/>
    <property type="evidence" value="ECO:0007669"/>
    <property type="project" value="TreeGrafter"/>
</dbReference>
<dbReference type="GO" id="GO:0055090">
    <property type="term" value="P:acylglycerol homeostasis"/>
    <property type="evidence" value="ECO:0007669"/>
    <property type="project" value="TreeGrafter"/>
</dbReference>
<dbReference type="GO" id="GO:0033344">
    <property type="term" value="P:cholesterol efflux"/>
    <property type="evidence" value="ECO:0007669"/>
    <property type="project" value="TreeGrafter"/>
</dbReference>
<dbReference type="GO" id="GO:0008203">
    <property type="term" value="P:cholesterol metabolic process"/>
    <property type="evidence" value="ECO:0007669"/>
    <property type="project" value="TreeGrafter"/>
</dbReference>
<dbReference type="GO" id="GO:0042157">
    <property type="term" value="P:lipoprotein metabolic process"/>
    <property type="evidence" value="ECO:0007669"/>
    <property type="project" value="InterPro"/>
</dbReference>
<dbReference type="GO" id="GO:0033700">
    <property type="term" value="P:phospholipid efflux"/>
    <property type="evidence" value="ECO:0007669"/>
    <property type="project" value="TreeGrafter"/>
</dbReference>
<dbReference type="FunFam" id="1.20.120.20:FF:000004">
    <property type="entry name" value="Apolipoprotein A-IV"/>
    <property type="match status" value="1"/>
</dbReference>
<dbReference type="FunFam" id="1.20.120.20:FF:000005">
    <property type="entry name" value="Apolipoprotein A-IV"/>
    <property type="match status" value="1"/>
</dbReference>
<dbReference type="Gene3D" id="1.20.120.20">
    <property type="entry name" value="Apolipoprotein"/>
    <property type="match status" value="2"/>
</dbReference>
<dbReference type="InterPro" id="IPR000074">
    <property type="entry name" value="ApoA_E"/>
</dbReference>
<dbReference type="InterPro" id="IPR050163">
    <property type="entry name" value="Apolipoprotein_A1/A4/E"/>
</dbReference>
<dbReference type="PANTHER" id="PTHR18976">
    <property type="entry name" value="APOLIPOPROTEIN"/>
    <property type="match status" value="1"/>
</dbReference>
<dbReference type="PANTHER" id="PTHR18976:SF1">
    <property type="entry name" value="APOLIPOPROTEIN A-IV"/>
    <property type="match status" value="1"/>
</dbReference>
<dbReference type="Pfam" id="PF01442">
    <property type="entry name" value="Apolipoprotein"/>
    <property type="match status" value="1"/>
</dbReference>
<dbReference type="SUPFAM" id="SSF58113">
    <property type="entry name" value="Apolipoprotein A-I"/>
    <property type="match status" value="2"/>
</dbReference>
<protein>
    <recommendedName>
        <fullName>Apolipoprotein A-IV</fullName>
        <shortName>Apo-AIV</shortName>
        <shortName>ApoA-IV</shortName>
    </recommendedName>
    <alternativeName>
        <fullName>Apolipoprotein A4</fullName>
    </alternativeName>
</protein>
<organism>
    <name type="scientific">Neomonachus schauinslandi</name>
    <name type="common">Hawaiian monk seal</name>
    <name type="synonym">Monachus schauinslandi</name>
    <dbReference type="NCBI Taxonomy" id="29088"/>
    <lineage>
        <taxon>Eukaryota</taxon>
        <taxon>Metazoa</taxon>
        <taxon>Chordata</taxon>
        <taxon>Craniata</taxon>
        <taxon>Vertebrata</taxon>
        <taxon>Euteleostomi</taxon>
        <taxon>Mammalia</taxon>
        <taxon>Eutheria</taxon>
        <taxon>Laurasiatheria</taxon>
        <taxon>Carnivora</taxon>
        <taxon>Caniformia</taxon>
        <taxon>Pinnipedia</taxon>
        <taxon>Phocidae</taxon>
        <taxon>Monachinae</taxon>
        <taxon>Monachini</taxon>
        <taxon>Neomonachus</taxon>
    </lineage>
</organism>
<name>APOA4_NEOSC</name>
<accession>A0A2Y9HKB5</accession>
<sequence length="382" mass="43657">MFLKAVVLTLSLVAVTGAQAEVSANQVATVVWDYFSQLSNNAKEAVEHLQKSELTQQLNALFQDKIGQVNTYTDNLQKKLVPFATELHERLRKDSEKLKEEIRKELEELRARLLPHADEVSRKIGDNMHELQQRLGPYAEELRTQVNTHAERLRNQLTAHAQSLETTLRQNVDNLQASLTPYADELKAKIDQNVEELKGHLTPYADELKVKIDQNVEDLRRSLAPYAQDVQEKLNHQLEGLAFQMKKNAEELKAKISANADELRQKLVPVAEVVRGKLRDNTEELQKSLAELSSHLDRQVEEFRRNVGPYGETFNKALLQQVEELRQKLGPYAGDVEDHLSFLEKDLRDKVNSFFSTLEEKENQDMLVAVPELQLTPVPLES</sequence>
<evidence type="ECO:0000250" key="1"/>
<evidence type="ECO:0000250" key="2">
    <source>
        <dbReference type="UniProtKB" id="P06727"/>
    </source>
</evidence>
<evidence type="ECO:0000250" key="3">
    <source>
        <dbReference type="UniProtKB" id="P33621"/>
    </source>
</evidence>
<evidence type="ECO:0000255" key="4"/>
<evidence type="ECO:0000305" key="5"/>
<reference key="1">
    <citation type="submission" date="2017-05" db="EMBL/GenBank/DDBJ databases">
        <title>Improved de novo genome assembly: linked-read sequencing combined with optical mapping produce a high quality mammalian genome at relatively low cost.</title>
        <authorList>
            <person name="Mohr D.W."/>
            <person name="Scott A.F."/>
        </authorList>
    </citation>
    <scope>NUCLEOTIDE SEQUENCE [LARGE SCALE GENOMIC DNA]</scope>
    <source>
        <tissue>Blood</tissue>
    </source>
</reference>
<reference key="2">
    <citation type="unpublished observations" date="2019-10">
        <authorList>
            <person name="Puppione D.L."/>
        </authorList>
    </citation>
    <scope>IDENTIFICATION</scope>
</reference>
<proteinExistence type="inferred from homology"/>
<comment type="function">
    <text evidence="3">May have a role in chylomicrons and VLDL secretion and catabolism. Required for efficient activation of lipoprotein lipase by ApoC-II; potent activator of LCAT. Apoa-IV is a major component of HDL and chylomicrons.</text>
</comment>
<comment type="subunit">
    <text evidence="2">Homodimer.</text>
</comment>
<comment type="subcellular location">
    <subcellularLocation>
        <location evidence="3">Secreted</location>
    </subcellularLocation>
</comment>
<comment type="domain">
    <text evidence="3">Nine of the thirteen 22-amino acid tandem repeats (each 22-mer is actually a tandem array of two, A and B, related 11-mers) occurring in this sequence are predicted to be highly alpha-helical, and many of these helices are amphipathic. They may therefore serve as lipid-binding domains with lecithin:cholesterol acyltransferase (LCAT) activating abilities.</text>
</comment>
<comment type="PTM">
    <text evidence="1">Phosphorylation sites are present in the extracellular medium.</text>
</comment>
<comment type="similarity">
    <text evidence="5">Belongs to the apolipoprotein A1/A4/E family.</text>
</comment>